<feature type="chain" id="PRO_0000241160" description="Glutamyl-tRNA(Gln) amidotransferase subunit A">
    <location>
        <begin position="1"/>
        <end position="488"/>
    </location>
</feature>
<feature type="active site" description="Charge relay system" evidence="1">
    <location>
        <position position="77"/>
    </location>
</feature>
<feature type="active site" description="Charge relay system" evidence="1">
    <location>
        <position position="152"/>
    </location>
</feature>
<feature type="active site" description="Acyl-ester intermediate" evidence="1">
    <location>
        <position position="176"/>
    </location>
</feature>
<comment type="function">
    <text evidence="1">Allows the formation of correctly charged Gln-tRNA(Gln) through the transamidation of misacylated Glu-tRNA(Gln) in organisms which lack glutaminyl-tRNA synthetase. The reaction takes place in the presence of glutamine and ATP through an activated gamma-phospho-Glu-tRNA(Gln).</text>
</comment>
<comment type="catalytic activity">
    <reaction evidence="1">
        <text>L-glutamyl-tRNA(Gln) + L-glutamine + ATP + H2O = L-glutaminyl-tRNA(Gln) + L-glutamate + ADP + phosphate + H(+)</text>
        <dbReference type="Rhea" id="RHEA:17521"/>
        <dbReference type="Rhea" id="RHEA-COMP:9681"/>
        <dbReference type="Rhea" id="RHEA-COMP:9684"/>
        <dbReference type="ChEBI" id="CHEBI:15377"/>
        <dbReference type="ChEBI" id="CHEBI:15378"/>
        <dbReference type="ChEBI" id="CHEBI:29985"/>
        <dbReference type="ChEBI" id="CHEBI:30616"/>
        <dbReference type="ChEBI" id="CHEBI:43474"/>
        <dbReference type="ChEBI" id="CHEBI:58359"/>
        <dbReference type="ChEBI" id="CHEBI:78520"/>
        <dbReference type="ChEBI" id="CHEBI:78521"/>
        <dbReference type="ChEBI" id="CHEBI:456216"/>
        <dbReference type="EC" id="6.3.5.7"/>
    </reaction>
</comment>
<comment type="subunit">
    <text evidence="1">Heterotrimer of A, B and C subunits.</text>
</comment>
<comment type="similarity">
    <text evidence="1">Belongs to the amidase family. GatA subfamily.</text>
</comment>
<proteinExistence type="inferred from homology"/>
<dbReference type="EC" id="6.3.5.7" evidence="1"/>
<dbReference type="EMBL" id="CP000024">
    <property type="protein sequence ID" value="AAV63156.1"/>
    <property type="molecule type" value="Genomic_DNA"/>
</dbReference>
<dbReference type="RefSeq" id="WP_002946584.1">
    <property type="nucleotide sequence ID" value="NC_006449.1"/>
</dbReference>
<dbReference type="SMR" id="Q5LYE9"/>
<dbReference type="GeneID" id="66899373"/>
<dbReference type="KEGG" id="stc:str1626"/>
<dbReference type="HOGENOM" id="CLU_009600_0_3_9"/>
<dbReference type="GO" id="GO:0030956">
    <property type="term" value="C:glutamyl-tRNA(Gln) amidotransferase complex"/>
    <property type="evidence" value="ECO:0007669"/>
    <property type="project" value="InterPro"/>
</dbReference>
<dbReference type="GO" id="GO:0005524">
    <property type="term" value="F:ATP binding"/>
    <property type="evidence" value="ECO:0007669"/>
    <property type="project" value="UniProtKB-KW"/>
</dbReference>
<dbReference type="GO" id="GO:0050567">
    <property type="term" value="F:glutaminyl-tRNA synthase (glutamine-hydrolyzing) activity"/>
    <property type="evidence" value="ECO:0007669"/>
    <property type="project" value="UniProtKB-UniRule"/>
</dbReference>
<dbReference type="GO" id="GO:0006412">
    <property type="term" value="P:translation"/>
    <property type="evidence" value="ECO:0007669"/>
    <property type="project" value="UniProtKB-UniRule"/>
</dbReference>
<dbReference type="Gene3D" id="3.90.1300.10">
    <property type="entry name" value="Amidase signature (AS) domain"/>
    <property type="match status" value="1"/>
</dbReference>
<dbReference type="HAMAP" id="MF_00120">
    <property type="entry name" value="GatA"/>
    <property type="match status" value="1"/>
</dbReference>
<dbReference type="InterPro" id="IPR000120">
    <property type="entry name" value="Amidase"/>
</dbReference>
<dbReference type="InterPro" id="IPR020556">
    <property type="entry name" value="Amidase_CS"/>
</dbReference>
<dbReference type="InterPro" id="IPR023631">
    <property type="entry name" value="Amidase_dom"/>
</dbReference>
<dbReference type="InterPro" id="IPR036928">
    <property type="entry name" value="AS_sf"/>
</dbReference>
<dbReference type="InterPro" id="IPR004412">
    <property type="entry name" value="GatA"/>
</dbReference>
<dbReference type="NCBIfam" id="TIGR00132">
    <property type="entry name" value="gatA"/>
    <property type="match status" value="1"/>
</dbReference>
<dbReference type="PANTHER" id="PTHR11895:SF151">
    <property type="entry name" value="GLUTAMYL-TRNA(GLN) AMIDOTRANSFERASE SUBUNIT A"/>
    <property type="match status" value="1"/>
</dbReference>
<dbReference type="PANTHER" id="PTHR11895">
    <property type="entry name" value="TRANSAMIDASE"/>
    <property type="match status" value="1"/>
</dbReference>
<dbReference type="Pfam" id="PF01425">
    <property type="entry name" value="Amidase"/>
    <property type="match status" value="1"/>
</dbReference>
<dbReference type="SUPFAM" id="SSF75304">
    <property type="entry name" value="Amidase signature (AS) enzymes"/>
    <property type="match status" value="1"/>
</dbReference>
<dbReference type="PROSITE" id="PS00571">
    <property type="entry name" value="AMIDASES"/>
    <property type="match status" value="1"/>
</dbReference>
<accession>Q5LYE9</accession>
<evidence type="ECO:0000255" key="1">
    <source>
        <dbReference type="HAMAP-Rule" id="MF_00120"/>
    </source>
</evidence>
<organism>
    <name type="scientific">Streptococcus thermophilus (strain CNRZ 1066)</name>
    <dbReference type="NCBI Taxonomy" id="299768"/>
    <lineage>
        <taxon>Bacteria</taxon>
        <taxon>Bacillati</taxon>
        <taxon>Bacillota</taxon>
        <taxon>Bacilli</taxon>
        <taxon>Lactobacillales</taxon>
        <taxon>Streptococcaceae</taxon>
        <taxon>Streptococcus</taxon>
    </lineage>
</organism>
<protein>
    <recommendedName>
        <fullName evidence="1">Glutamyl-tRNA(Gln) amidotransferase subunit A</fullName>
        <shortName evidence="1">Glu-ADT subunit A</shortName>
        <ecNumber evidence="1">6.3.5.7</ecNumber>
    </recommendedName>
</protein>
<keyword id="KW-0067">ATP-binding</keyword>
<keyword id="KW-0436">Ligase</keyword>
<keyword id="KW-0547">Nucleotide-binding</keyword>
<keyword id="KW-0648">Protein biosynthesis</keyword>
<sequence length="488" mass="52124">MSFNNKTIEELHNLLVSKEISATELTQATIDDIKAREEAVNAFVTVAEEAALAQAKAIDEKGIDADNLLSGIPFAVKDNISTDGILTTAASKMLYNYEPIFDATAVANAKAKDMIVIGKTNMDEFAMGGSGETSYYGATKNAWDHSKVPGGSSSGSAAAVASGQVRLSLGSDTGGSIRQPAAFNGIVGLKPTYGTVSRFGLIAFGSSLDQIGTFSQTVKENAQLLNVIASEDAKDSTSAPVRIADFTSKIGQDIKGMKIALPKEYLGEGIDPEVKETILDAAKHFEKLGATVEEVSLPHSKYGVAVYYIIASSEASSNLQRFDGIRYGFRAEDAKNLDDIYVNTRSQGFGDEVKRRIMLGTFSLSSGYYDAYYKKAGQVRTLIIQDFEKVFADYDLILGPTAPSVAFDLDTLNHDPVAMYLADLLTIPVNLAGLPGISIPAGFAQGLPVGLQLIGPKYSEETIYQAAAAFEATTDYHKQQPVIFGGDN</sequence>
<gene>
    <name evidence="1" type="primary">gatA</name>
    <name type="ordered locus">str1626</name>
</gene>
<reference key="1">
    <citation type="journal article" date="2004" name="Nat. Biotechnol.">
        <title>Complete sequence and comparative genome analysis of the dairy bacterium Streptococcus thermophilus.</title>
        <authorList>
            <person name="Bolotin A."/>
            <person name="Quinquis B."/>
            <person name="Renault P."/>
            <person name="Sorokin A."/>
            <person name="Ehrlich S.D."/>
            <person name="Kulakauskas S."/>
            <person name="Lapidus A."/>
            <person name="Goltsman E."/>
            <person name="Mazur M."/>
            <person name="Pusch G.D."/>
            <person name="Fonstein M."/>
            <person name="Overbeek R."/>
            <person name="Kyprides N."/>
            <person name="Purnelle B."/>
            <person name="Prozzi D."/>
            <person name="Ngui K."/>
            <person name="Masuy D."/>
            <person name="Hancy F."/>
            <person name="Burteau S."/>
            <person name="Boutry M."/>
            <person name="Delcour J."/>
            <person name="Goffeau A."/>
            <person name="Hols P."/>
        </authorList>
    </citation>
    <scope>NUCLEOTIDE SEQUENCE [LARGE SCALE GENOMIC DNA]</scope>
    <source>
        <strain>CNRZ 1066</strain>
    </source>
</reference>
<name>GATA_STRT1</name>